<keyword id="KW-0687">Ribonucleoprotein</keyword>
<keyword id="KW-0689">Ribosomal protein</keyword>
<keyword id="KW-0694">RNA-binding</keyword>
<keyword id="KW-0699">rRNA-binding</keyword>
<reference key="1">
    <citation type="submission" date="2007-12" db="EMBL/GenBank/DDBJ databases">
        <title>Complete sequence of Methylobacterium extorquens PA1.</title>
        <authorList>
            <consortium name="US DOE Joint Genome Institute"/>
            <person name="Copeland A."/>
            <person name="Lucas S."/>
            <person name="Lapidus A."/>
            <person name="Barry K."/>
            <person name="Glavina del Rio T."/>
            <person name="Dalin E."/>
            <person name="Tice H."/>
            <person name="Pitluck S."/>
            <person name="Saunders E."/>
            <person name="Brettin T."/>
            <person name="Bruce D."/>
            <person name="Detter J.C."/>
            <person name="Han C."/>
            <person name="Schmutz J."/>
            <person name="Larimer F."/>
            <person name="Land M."/>
            <person name="Hauser L."/>
            <person name="Kyrpides N."/>
            <person name="Kim E."/>
            <person name="Marx C."/>
            <person name="Richardson P."/>
        </authorList>
    </citation>
    <scope>NUCLEOTIDE SEQUENCE [LARGE SCALE GENOMIC DNA]</scope>
    <source>
        <strain>PA1</strain>
    </source>
</reference>
<sequence>MARVKRGVTSHAKHKKVLKAAKGYYGRRKNTIRIAKQAVEKGLQYAYRDRKNKKRTFRALWIQRLNAAVREHGLTYSRFINALAQSGIEVDRKALSELAIHEPAAFAAVVEKAKSALPKAA</sequence>
<comment type="function">
    <text evidence="1">Binds directly to 23S ribosomal RNA and is necessary for the in vitro assembly process of the 50S ribosomal subunit. It is not involved in the protein synthesizing functions of that subunit.</text>
</comment>
<comment type="similarity">
    <text evidence="1">Belongs to the bacterial ribosomal protein bL20 family.</text>
</comment>
<proteinExistence type="inferred from homology"/>
<organism>
    <name type="scientific">Methylorubrum extorquens (strain PA1)</name>
    <name type="common">Methylobacterium extorquens</name>
    <dbReference type="NCBI Taxonomy" id="419610"/>
    <lineage>
        <taxon>Bacteria</taxon>
        <taxon>Pseudomonadati</taxon>
        <taxon>Pseudomonadota</taxon>
        <taxon>Alphaproteobacteria</taxon>
        <taxon>Hyphomicrobiales</taxon>
        <taxon>Methylobacteriaceae</taxon>
        <taxon>Methylorubrum</taxon>
    </lineage>
</organism>
<dbReference type="EMBL" id="CP000908">
    <property type="protein sequence ID" value="ABY30027.1"/>
    <property type="molecule type" value="Genomic_DNA"/>
</dbReference>
<dbReference type="RefSeq" id="WP_003602669.1">
    <property type="nucleotide sequence ID" value="NC_010172.1"/>
</dbReference>
<dbReference type="SMR" id="A9W371"/>
<dbReference type="GeneID" id="72989285"/>
<dbReference type="KEGG" id="mex:Mext_1628"/>
<dbReference type="eggNOG" id="COG0292">
    <property type="taxonomic scope" value="Bacteria"/>
</dbReference>
<dbReference type="HOGENOM" id="CLU_123265_0_1_5"/>
<dbReference type="BioCyc" id="MEXT419610:MEXT_RS08265-MONOMER"/>
<dbReference type="GO" id="GO:1990904">
    <property type="term" value="C:ribonucleoprotein complex"/>
    <property type="evidence" value="ECO:0007669"/>
    <property type="project" value="UniProtKB-KW"/>
</dbReference>
<dbReference type="GO" id="GO:0005840">
    <property type="term" value="C:ribosome"/>
    <property type="evidence" value="ECO:0007669"/>
    <property type="project" value="UniProtKB-KW"/>
</dbReference>
<dbReference type="GO" id="GO:0019843">
    <property type="term" value="F:rRNA binding"/>
    <property type="evidence" value="ECO:0007669"/>
    <property type="project" value="UniProtKB-UniRule"/>
</dbReference>
<dbReference type="GO" id="GO:0003735">
    <property type="term" value="F:structural constituent of ribosome"/>
    <property type="evidence" value="ECO:0007669"/>
    <property type="project" value="InterPro"/>
</dbReference>
<dbReference type="GO" id="GO:0000027">
    <property type="term" value="P:ribosomal large subunit assembly"/>
    <property type="evidence" value="ECO:0007669"/>
    <property type="project" value="UniProtKB-UniRule"/>
</dbReference>
<dbReference type="GO" id="GO:0006412">
    <property type="term" value="P:translation"/>
    <property type="evidence" value="ECO:0007669"/>
    <property type="project" value="InterPro"/>
</dbReference>
<dbReference type="CDD" id="cd07026">
    <property type="entry name" value="Ribosomal_L20"/>
    <property type="match status" value="1"/>
</dbReference>
<dbReference type="FunFam" id="1.10.1900.20:FF:000001">
    <property type="entry name" value="50S ribosomal protein L20"/>
    <property type="match status" value="1"/>
</dbReference>
<dbReference type="Gene3D" id="6.10.160.10">
    <property type="match status" value="1"/>
</dbReference>
<dbReference type="Gene3D" id="1.10.1900.20">
    <property type="entry name" value="Ribosomal protein L20"/>
    <property type="match status" value="1"/>
</dbReference>
<dbReference type="HAMAP" id="MF_00382">
    <property type="entry name" value="Ribosomal_bL20"/>
    <property type="match status" value="1"/>
</dbReference>
<dbReference type="InterPro" id="IPR005813">
    <property type="entry name" value="Ribosomal_bL20"/>
</dbReference>
<dbReference type="InterPro" id="IPR049946">
    <property type="entry name" value="RIBOSOMAL_L20_CS"/>
</dbReference>
<dbReference type="InterPro" id="IPR035566">
    <property type="entry name" value="Ribosomal_protein_bL20_C"/>
</dbReference>
<dbReference type="NCBIfam" id="TIGR01032">
    <property type="entry name" value="rplT_bact"/>
    <property type="match status" value="1"/>
</dbReference>
<dbReference type="PANTHER" id="PTHR10986">
    <property type="entry name" value="39S RIBOSOMAL PROTEIN L20"/>
    <property type="match status" value="1"/>
</dbReference>
<dbReference type="Pfam" id="PF00453">
    <property type="entry name" value="Ribosomal_L20"/>
    <property type="match status" value="1"/>
</dbReference>
<dbReference type="PRINTS" id="PR00062">
    <property type="entry name" value="RIBOSOMALL20"/>
</dbReference>
<dbReference type="SUPFAM" id="SSF74731">
    <property type="entry name" value="Ribosomal protein L20"/>
    <property type="match status" value="1"/>
</dbReference>
<dbReference type="PROSITE" id="PS00937">
    <property type="entry name" value="RIBOSOMAL_L20"/>
    <property type="match status" value="1"/>
</dbReference>
<evidence type="ECO:0000255" key="1">
    <source>
        <dbReference type="HAMAP-Rule" id="MF_00382"/>
    </source>
</evidence>
<evidence type="ECO:0000305" key="2"/>
<accession>A9W371</accession>
<protein>
    <recommendedName>
        <fullName evidence="1">Large ribosomal subunit protein bL20</fullName>
    </recommendedName>
    <alternativeName>
        <fullName evidence="2">50S ribosomal protein L20</fullName>
    </alternativeName>
</protein>
<gene>
    <name evidence="1" type="primary">rplT</name>
    <name type="ordered locus">Mext_1628</name>
</gene>
<name>RL20_METEP</name>
<feature type="chain" id="PRO_1000122335" description="Large ribosomal subunit protein bL20">
    <location>
        <begin position="1"/>
        <end position="121"/>
    </location>
</feature>